<keyword id="KW-0024">Alternative initiation</keyword>
<keyword id="KW-1168">Fusion of virus membrane with host membrane</keyword>
<keyword id="KW-0325">Glycoprotein</keyword>
<keyword id="KW-0945">Host-virus interaction</keyword>
<keyword id="KW-0449">Lipoprotein</keyword>
<keyword id="KW-0472">Membrane</keyword>
<keyword id="KW-0519">Myristate</keyword>
<keyword id="KW-0597">Phosphoprotein</keyword>
<keyword id="KW-0812">Transmembrane</keyword>
<keyword id="KW-1133">Transmembrane helix</keyword>
<keyword id="KW-1161">Viral attachment to host cell</keyword>
<keyword id="KW-0261">Viral envelope protein</keyword>
<keyword id="KW-1162">Viral penetration into host cytoplasm</keyword>
<keyword id="KW-0946">Virion</keyword>
<keyword id="KW-1160">Virus entry into host cell</keyword>
<gene>
    <name type="primary">S</name>
</gene>
<reference key="1">
    <citation type="journal article" date="1989" name="Virology">
        <title>Molecular cloning and sequence analysis of duck hepatitis B virus genomes of a new variant isolated from Shanghai ducks.</title>
        <authorList>
            <person name="Uchida M."/>
            <person name="Esumi M."/>
            <person name="Shikata T."/>
        </authorList>
    </citation>
    <scope>NUCLEOTIDE SEQUENCE [GENOMIC DNA]</scope>
</reference>
<dbReference type="EMBL" id="M32990">
    <property type="protein sequence ID" value="AAA45755.1"/>
    <property type="status" value="ALT_INIT"/>
    <property type="molecule type" value="Genomic_DNA"/>
</dbReference>
<dbReference type="PIR" id="C33746">
    <property type="entry name" value="SAVLBD"/>
</dbReference>
<dbReference type="SMR" id="P17194"/>
<dbReference type="GlyCosmos" id="P17194">
    <property type="glycosylation" value="1 site, No reported glycans"/>
</dbReference>
<dbReference type="Proteomes" id="UP000008682">
    <property type="component" value="Genome"/>
</dbReference>
<dbReference type="GO" id="GO:0016020">
    <property type="term" value="C:membrane"/>
    <property type="evidence" value="ECO:0007669"/>
    <property type="project" value="UniProtKB-KW"/>
</dbReference>
<dbReference type="GO" id="GO:0019031">
    <property type="term" value="C:viral envelope"/>
    <property type="evidence" value="ECO:0007669"/>
    <property type="project" value="UniProtKB-KW"/>
</dbReference>
<dbReference type="GO" id="GO:0055036">
    <property type="term" value="C:virion membrane"/>
    <property type="evidence" value="ECO:0007669"/>
    <property type="project" value="UniProtKB-SubCell"/>
</dbReference>
<dbReference type="GO" id="GO:0039663">
    <property type="term" value="P:membrane fusion involved in viral entry into host cell"/>
    <property type="evidence" value="ECO:0007669"/>
    <property type="project" value="UniProtKB-KW"/>
</dbReference>
<dbReference type="GO" id="GO:0046718">
    <property type="term" value="P:symbiont entry into host cell"/>
    <property type="evidence" value="ECO:0007669"/>
    <property type="project" value="UniProtKB-KW"/>
</dbReference>
<dbReference type="GO" id="GO:0019062">
    <property type="term" value="P:virion attachment to host cell"/>
    <property type="evidence" value="ECO:0007669"/>
    <property type="project" value="UniProtKB-KW"/>
</dbReference>
<dbReference type="InterPro" id="IPR000349">
    <property type="entry name" value="HBV_HBSAG"/>
</dbReference>
<dbReference type="Pfam" id="PF00695">
    <property type="entry name" value="vMSA"/>
    <property type="match status" value="2"/>
</dbReference>
<feature type="initiator methionine" description="Removed; by host" evidence="1">
    <location>
        <position position="1"/>
    </location>
</feature>
<feature type="chain" id="PRO_0000038079" description="Large envelope protein">
    <location>
        <begin position="2"/>
        <end position="330"/>
    </location>
</feature>
<feature type="chain" id="PRO_0000322198" description="Truncated S protein">
    <location>
        <begin position="164"/>
        <end position="240" status="uncertain"/>
    </location>
</feature>
<feature type="topological domain" description="Cytoplasmic; in internal conformation" evidence="2">
    <location>
        <begin position="2"/>
        <end position="238"/>
    </location>
</feature>
<feature type="topological domain" description="Extracellular; in external conformation" evidence="2">
    <location>
        <begin position="2"/>
        <end position="165"/>
    </location>
</feature>
<feature type="transmembrane region" description="Helical; Name=TM1; Note=In external conformation" evidence="2">
    <location>
        <begin position="166"/>
        <end position="186"/>
    </location>
</feature>
<feature type="topological domain" description="Cytoplasmic; in external conformation" evidence="2">
    <location>
        <begin position="187"/>
        <end position="238"/>
    </location>
</feature>
<feature type="transmembrane region" description="Helical; Name=TM2" evidence="2">
    <location>
        <begin position="239"/>
        <end position="259"/>
    </location>
</feature>
<feature type="topological domain" description="Extracellular" evidence="2">
    <location>
        <begin position="260"/>
        <end position="292"/>
    </location>
</feature>
<feature type="transmembrane region" description="Helical; Name=TM3" evidence="2">
    <location>
        <begin position="293"/>
        <end position="313"/>
    </location>
</feature>
<feature type="topological domain" description="Cytoplasmic" evidence="2">
    <location>
        <begin position="314"/>
        <end position="330"/>
    </location>
</feature>
<feature type="region of interest" description="Pre-S" evidence="1">
    <location>
        <begin position="2"/>
        <end position="163"/>
    </location>
</feature>
<feature type="region of interest" description="Disordered" evidence="3">
    <location>
        <begin position="68"/>
        <end position="125"/>
    </location>
</feature>
<feature type="compositionally biased region" description="Polar residues" evidence="3">
    <location>
        <begin position="76"/>
        <end position="88"/>
    </location>
</feature>
<feature type="compositionally biased region" description="Basic and acidic residues" evidence="3">
    <location>
        <begin position="92"/>
        <end position="109"/>
    </location>
</feature>
<feature type="site" description="Cleavage; by host" evidence="2">
    <location>
        <begin position="240" status="uncertain"/>
        <end position="241" status="uncertain"/>
    </location>
</feature>
<feature type="lipid moiety-binding region" description="N-myristoyl glycine; by host" evidence="1">
    <location>
        <position position="2"/>
    </location>
</feature>
<feature type="glycosylation site" description="N-linked (GlcNAc...) asparagine; by host" evidence="2">
    <location>
        <position position="262"/>
    </location>
</feature>
<feature type="splice variant" id="VSP_031889" description="In isoform S." evidence="4">
    <location>
        <begin position="1"/>
        <end position="163"/>
    </location>
</feature>
<proteinExistence type="inferred from homology"/>
<accession>P17194</accession>
<comment type="function">
    <text evidence="1">The large envelope protein exists in two topological conformations, one which is termed 'external' or Le-HBsAg and the other 'internal' or Li-HBsAg. In its external conformation the protein attaches the virus to cell receptors and thereby initiating infection. This interaction determines the species specificity and liver tropism. The large envelope protein probably also assumes fusion between virion and host membranes. In its internal conformation the protein plays a role in virion morphogenesis and mediates the contact with the nucleocapsid like a matrix protein (By similarity).</text>
</comment>
<comment type="function">
    <text evidence="1">Truncated S protein may be involved in translocation of pre-S domain through the virion membrane.</text>
</comment>
<comment type="subunit">
    <text evidence="1">Large internal envelope protein interacts with capsid protein.</text>
</comment>
<comment type="subcellular location">
    <subcellularLocation>
        <location>Virion membrane</location>
    </subcellularLocation>
</comment>
<comment type="alternative products">
    <event type="alternative initiation"/>
    <isoform>
        <id>P17194-1</id>
        <name>L</name>
        <name>Large envelope protein</name>
        <name>LHB</name>
        <name>L-HBsAg</name>
        <sequence type="displayed"/>
    </isoform>
    <isoform>
        <id>P17194-2</id>
        <name>S</name>
        <name>Small envelope protein</name>
        <name>SHB</name>
        <name>S-HBsAg</name>
        <sequence type="described" ref="VSP_031889"/>
    </isoform>
</comment>
<comment type="domain">
    <text>The large envelope protein is synthesized with the pre-S region at the cytosolic side of the endoplasmic reticulum and, hence will be within the virion after budding. Therefore the pre-S region is not N-glycosylated. Later a post-translational translocation of N-terminal pre-S and TM1 domains occur in about 50% of proteins at the virion surface. These molecules change their topology by an unknown mechanism, resulting in exposure of pre-S region at virion surface.</text>
</comment>
<comment type="PTM">
    <text>Myristoylation contributes importantly to DHBV infectivity. It is most likely required for an early step of the life cycle involving the entry or uncoating of virus particles.</text>
</comment>
<comment type="PTM">
    <text>Phosphorylated on pre-S domain for about 50% of L proteins, the L chains with internal pre-S region (Li-HBsAg).</text>
</comment>
<comment type="similarity">
    <text evidence="4">Belongs to the avihepadnavirus major surface antigen family.</text>
</comment>
<comment type="sequence caution" evidence="4">
    <conflict type="erroneous initiation">
        <sequence resource="EMBL-CDS" id="AAA45755"/>
    </conflict>
</comment>
<organismHost>
    <name type="scientific">Anas</name>
    <name type="common">ducks</name>
    <dbReference type="NCBI Taxonomy" id="8835"/>
</organismHost>
<protein>
    <recommendedName>
        <fullName>Large envelope protein</fullName>
    </recommendedName>
    <alternativeName>
        <fullName>L glycoprotein</fullName>
    </alternativeName>
    <alternativeName>
        <fullName>L-HBsAg</fullName>
        <shortName>LHB</shortName>
    </alternativeName>
    <alternativeName>
        <fullName>Large S protein</fullName>
    </alternativeName>
    <alternativeName>
        <fullName>Large surface protein</fullName>
    </alternativeName>
    <alternativeName>
        <fullName>Major surface antigen</fullName>
    </alternativeName>
    <component>
        <recommendedName>
            <fullName>Truncated S protein</fullName>
            <shortName>St</shortName>
        </recommendedName>
    </component>
</protein>
<evidence type="ECO:0000250" key="1"/>
<evidence type="ECO:0000255" key="2"/>
<evidence type="ECO:0000256" key="3">
    <source>
        <dbReference type="SAM" id="MobiDB-lite"/>
    </source>
</evidence>
<evidence type="ECO:0000305" key="4"/>
<name>HBSAG_HPBDB</name>
<organism>
    <name type="scientific">Duck hepatitis B virus (isolate brown Shanghai duck S5)</name>
    <name type="common">DHBV</name>
    <dbReference type="NCBI Taxonomy" id="10439"/>
    <lineage>
        <taxon>Viruses</taxon>
        <taxon>Riboviria</taxon>
        <taxon>Pararnavirae</taxon>
        <taxon>Artverviricota</taxon>
        <taxon>Revtraviricetes</taxon>
        <taxon>Blubervirales</taxon>
        <taxon>Hepadnaviridae</taxon>
        <taxon>Avihepadnavirus</taxon>
        <taxon>Duck hepatitis B virus</taxon>
    </lineage>
</organism>
<sequence>MGQQPAKSMDVRRIEGGELLLNQLAGRMIPKGTVTWSGKFPTIDHLLDHVQTMEEVNTMQQQGAWPAGAGRRLGLTNPTPHETPQPQWTPEEDQKAREAFRRYQEERPPETTTIAPTSPTPWKLQPGDDPLLENKSLLETHPLYQNPEPAVPVIKTPPLKKKKMPGTFGGILAGLIGLLVSFFLLIKILEILRRLDWWWISLSSPKGKMQCAFQDTGAQISPHYVGSCPWGCPGFLWTYLRLFIIFLLILLVAAGLLYLTDNMSIILGKLQWESVSALFSSISSLLPSDQKSLVALIFGLLLIWMTSSSATQTLVTLTQLATLSALFYKN</sequence>